<evidence type="ECO:0000255" key="1">
    <source>
        <dbReference type="HAMAP-Rule" id="MF_00270"/>
    </source>
</evidence>
<evidence type="ECO:0000305" key="2"/>
<accession>B5R9F0</accession>
<organism>
    <name type="scientific">Salmonella gallinarum (strain 287/91 / NCTC 13346)</name>
    <dbReference type="NCBI Taxonomy" id="550538"/>
    <lineage>
        <taxon>Bacteria</taxon>
        <taxon>Pseudomonadati</taxon>
        <taxon>Pseudomonadota</taxon>
        <taxon>Gammaproteobacteria</taxon>
        <taxon>Enterobacterales</taxon>
        <taxon>Enterobacteriaceae</taxon>
        <taxon>Salmonella</taxon>
    </lineage>
</organism>
<feature type="chain" id="PRO_1000114446" description="Small ribosomal subunit protein bS18">
    <location>
        <begin position="1"/>
        <end position="75"/>
    </location>
</feature>
<reference key="1">
    <citation type="journal article" date="2008" name="Genome Res.">
        <title>Comparative genome analysis of Salmonella enteritidis PT4 and Salmonella gallinarum 287/91 provides insights into evolutionary and host adaptation pathways.</title>
        <authorList>
            <person name="Thomson N.R."/>
            <person name="Clayton D.J."/>
            <person name="Windhorst D."/>
            <person name="Vernikos G."/>
            <person name="Davidson S."/>
            <person name="Churcher C."/>
            <person name="Quail M.A."/>
            <person name="Stevens M."/>
            <person name="Jones M.A."/>
            <person name="Watson M."/>
            <person name="Barron A."/>
            <person name="Layton A."/>
            <person name="Pickard D."/>
            <person name="Kingsley R.A."/>
            <person name="Bignell A."/>
            <person name="Clark L."/>
            <person name="Harris B."/>
            <person name="Ormond D."/>
            <person name="Abdellah Z."/>
            <person name="Brooks K."/>
            <person name="Cherevach I."/>
            <person name="Chillingworth T."/>
            <person name="Woodward J."/>
            <person name="Norberczak H."/>
            <person name="Lord A."/>
            <person name="Arrowsmith C."/>
            <person name="Jagels K."/>
            <person name="Moule S."/>
            <person name="Mungall K."/>
            <person name="Saunders M."/>
            <person name="Whitehead S."/>
            <person name="Chabalgoity J.A."/>
            <person name="Maskell D."/>
            <person name="Humphreys T."/>
            <person name="Roberts M."/>
            <person name="Barrow P.A."/>
            <person name="Dougan G."/>
            <person name="Parkhill J."/>
        </authorList>
    </citation>
    <scope>NUCLEOTIDE SEQUENCE [LARGE SCALE GENOMIC DNA]</scope>
    <source>
        <strain>287/91 / NCTC 13346</strain>
    </source>
</reference>
<dbReference type="EMBL" id="AM933173">
    <property type="protein sequence ID" value="CAR39998.1"/>
    <property type="molecule type" value="Genomic_DNA"/>
</dbReference>
<dbReference type="RefSeq" id="WP_000135199.1">
    <property type="nucleotide sequence ID" value="NC_011274.1"/>
</dbReference>
<dbReference type="SMR" id="B5R9F0"/>
<dbReference type="GeneID" id="98186237"/>
<dbReference type="KEGG" id="seg:SG4235"/>
<dbReference type="HOGENOM" id="CLU_148710_2_3_6"/>
<dbReference type="Proteomes" id="UP000008321">
    <property type="component" value="Chromosome"/>
</dbReference>
<dbReference type="GO" id="GO:0022627">
    <property type="term" value="C:cytosolic small ribosomal subunit"/>
    <property type="evidence" value="ECO:0007669"/>
    <property type="project" value="TreeGrafter"/>
</dbReference>
<dbReference type="GO" id="GO:0070181">
    <property type="term" value="F:small ribosomal subunit rRNA binding"/>
    <property type="evidence" value="ECO:0007669"/>
    <property type="project" value="TreeGrafter"/>
</dbReference>
<dbReference type="GO" id="GO:0003735">
    <property type="term" value="F:structural constituent of ribosome"/>
    <property type="evidence" value="ECO:0007669"/>
    <property type="project" value="InterPro"/>
</dbReference>
<dbReference type="GO" id="GO:0006412">
    <property type="term" value="P:translation"/>
    <property type="evidence" value="ECO:0007669"/>
    <property type="project" value="UniProtKB-UniRule"/>
</dbReference>
<dbReference type="FunFam" id="4.10.640.10:FF:000001">
    <property type="entry name" value="30S ribosomal protein S18"/>
    <property type="match status" value="1"/>
</dbReference>
<dbReference type="Gene3D" id="4.10.640.10">
    <property type="entry name" value="Ribosomal protein S18"/>
    <property type="match status" value="1"/>
</dbReference>
<dbReference type="HAMAP" id="MF_00270">
    <property type="entry name" value="Ribosomal_bS18"/>
    <property type="match status" value="1"/>
</dbReference>
<dbReference type="InterPro" id="IPR001648">
    <property type="entry name" value="Ribosomal_bS18"/>
</dbReference>
<dbReference type="InterPro" id="IPR018275">
    <property type="entry name" value="Ribosomal_bS18_CS"/>
</dbReference>
<dbReference type="InterPro" id="IPR036870">
    <property type="entry name" value="Ribosomal_bS18_sf"/>
</dbReference>
<dbReference type="NCBIfam" id="TIGR00165">
    <property type="entry name" value="S18"/>
    <property type="match status" value="1"/>
</dbReference>
<dbReference type="PANTHER" id="PTHR13479">
    <property type="entry name" value="30S RIBOSOMAL PROTEIN S18"/>
    <property type="match status" value="1"/>
</dbReference>
<dbReference type="PANTHER" id="PTHR13479:SF40">
    <property type="entry name" value="SMALL RIBOSOMAL SUBUNIT PROTEIN BS18M"/>
    <property type="match status" value="1"/>
</dbReference>
<dbReference type="Pfam" id="PF01084">
    <property type="entry name" value="Ribosomal_S18"/>
    <property type="match status" value="1"/>
</dbReference>
<dbReference type="PRINTS" id="PR00974">
    <property type="entry name" value="RIBOSOMALS18"/>
</dbReference>
<dbReference type="SUPFAM" id="SSF46911">
    <property type="entry name" value="Ribosomal protein S18"/>
    <property type="match status" value="1"/>
</dbReference>
<dbReference type="PROSITE" id="PS00057">
    <property type="entry name" value="RIBOSOMAL_S18"/>
    <property type="match status" value="1"/>
</dbReference>
<comment type="function">
    <text evidence="1">Binds as a heterodimer with protein bS6 to the central domain of the 16S rRNA, where it helps stabilize the platform of the 30S subunit.</text>
</comment>
<comment type="subunit">
    <text evidence="1">Part of the 30S ribosomal subunit. Forms a tight heterodimer with protein bS6.</text>
</comment>
<comment type="similarity">
    <text evidence="1">Belongs to the bacterial ribosomal protein bS18 family.</text>
</comment>
<gene>
    <name evidence="1" type="primary">rpsR</name>
    <name type="ordered locus">SG4235</name>
</gene>
<keyword id="KW-0687">Ribonucleoprotein</keyword>
<keyword id="KW-0689">Ribosomal protein</keyword>
<keyword id="KW-0694">RNA-binding</keyword>
<keyword id="KW-0699">rRNA-binding</keyword>
<sequence>MARYFRRRKFCRFTAEGVQEIDYKDIATLKNYITESGKIVPSRITGTRAKYQRQLARAIKRARYLSLLPYTDRHQ</sequence>
<name>RS18_SALG2</name>
<protein>
    <recommendedName>
        <fullName evidence="1">Small ribosomal subunit protein bS18</fullName>
    </recommendedName>
    <alternativeName>
        <fullName evidence="2">30S ribosomal protein S18</fullName>
    </alternativeName>
</protein>
<proteinExistence type="inferred from homology"/>